<keyword id="KW-0002">3D-structure</keyword>
<keyword id="KW-0067">ATP-binding</keyword>
<keyword id="KW-0963">Cytoplasm</keyword>
<keyword id="KW-0418">Kinase</keyword>
<keyword id="KW-0449">Lipoprotein</keyword>
<keyword id="KW-0472">Membrane</keyword>
<keyword id="KW-0519">Myristate</keyword>
<keyword id="KW-0547">Nucleotide-binding</keyword>
<keyword id="KW-0564">Palmitate</keyword>
<keyword id="KW-0597">Phosphoprotein</keyword>
<keyword id="KW-1267">Proteomics identification</keyword>
<keyword id="KW-1185">Reference proteome</keyword>
<keyword id="KW-0723">Serine/threonine-protein kinase</keyword>
<keyword id="KW-0808">Transferase</keyword>
<comment type="function">
    <text evidence="4">Membrane-associated protein kinase that phosphorylates on serine and threonine residues. In vitro substrates include DRG1, ENO1 and EIF4EBP1. Also autophosphorylates. May be involved in secretory vesicle trafficking or intracellular signaling. May have a role in regulating stromal-epithelial interactions that occur during ductal morphogenesis in the mammary gland. May be involved in TGF-beta signaling. Able to autophosphorylate on Tyr residue; it is however unclear whether it has tyrosine-protein kinase toward other proteins.</text>
</comment>
<comment type="catalytic activity">
    <reaction>
        <text>L-seryl-[protein] + ATP = O-phospho-L-seryl-[protein] + ADP + H(+)</text>
        <dbReference type="Rhea" id="RHEA:17989"/>
        <dbReference type="Rhea" id="RHEA-COMP:9863"/>
        <dbReference type="Rhea" id="RHEA-COMP:11604"/>
        <dbReference type="ChEBI" id="CHEBI:15378"/>
        <dbReference type="ChEBI" id="CHEBI:29999"/>
        <dbReference type="ChEBI" id="CHEBI:30616"/>
        <dbReference type="ChEBI" id="CHEBI:83421"/>
        <dbReference type="ChEBI" id="CHEBI:456216"/>
        <dbReference type="EC" id="2.7.11.1"/>
    </reaction>
</comment>
<comment type="catalytic activity">
    <reaction>
        <text>L-threonyl-[protein] + ATP = O-phospho-L-threonyl-[protein] + ADP + H(+)</text>
        <dbReference type="Rhea" id="RHEA:46608"/>
        <dbReference type="Rhea" id="RHEA-COMP:11060"/>
        <dbReference type="Rhea" id="RHEA-COMP:11605"/>
        <dbReference type="ChEBI" id="CHEBI:15378"/>
        <dbReference type="ChEBI" id="CHEBI:30013"/>
        <dbReference type="ChEBI" id="CHEBI:30616"/>
        <dbReference type="ChEBI" id="CHEBI:61977"/>
        <dbReference type="ChEBI" id="CHEBI:456216"/>
        <dbReference type="EC" id="2.7.11.1"/>
    </reaction>
</comment>
<comment type="catalytic activity">
    <reaction evidence="3">
        <text>L-tyrosyl-[protein] + ATP = O-phospho-L-tyrosyl-[protein] + ADP + H(+)</text>
        <dbReference type="Rhea" id="RHEA:10596"/>
        <dbReference type="Rhea" id="RHEA-COMP:10136"/>
        <dbReference type="Rhea" id="RHEA-COMP:20101"/>
        <dbReference type="ChEBI" id="CHEBI:15378"/>
        <dbReference type="ChEBI" id="CHEBI:30616"/>
        <dbReference type="ChEBI" id="CHEBI:46858"/>
        <dbReference type="ChEBI" id="CHEBI:61978"/>
        <dbReference type="ChEBI" id="CHEBI:456216"/>
        <dbReference type="EC" id="2.7.10.2"/>
    </reaction>
</comment>
<comment type="subunit">
    <text evidence="7">Monomer. Interacts with DRG1 (via its N-terminal); the interaction phosphorylates DRG1.</text>
</comment>
<comment type="interaction">
    <interactant intactId="EBI-749295">
        <id>O75716</id>
    </interactant>
    <interactant intactId="EBI-742002">
        <id>Q6UY14</id>
        <label>ADAMTSL4</label>
    </interactant>
    <organismsDiffer>false</organismsDiffer>
    <experiments>3</experiments>
</comment>
<comment type="interaction">
    <interactant intactId="EBI-749295">
        <id>O75716</id>
    </interactant>
    <interactant intactId="EBI-10173507">
        <id>Q6UY14-3</id>
        <label>ADAMTSL4</label>
    </interactant>
    <organismsDiffer>false</organismsDiffer>
    <experiments>3</experiments>
</comment>
<comment type="interaction">
    <interactant intactId="EBI-749295">
        <id>O75716</id>
    </interactant>
    <interactant intactId="EBI-712648">
        <id>O95994</id>
        <label>AGR2</label>
    </interactant>
    <organismsDiffer>false</organismsDiffer>
    <experiments>3</experiments>
</comment>
<comment type="interaction">
    <interactant intactId="EBI-749295">
        <id>O75716</id>
    </interactant>
    <interactant intactId="EBI-765971">
        <id>Q9HBZ2</id>
        <label>ARNT2</label>
    </interactant>
    <organismsDiffer>false</organismsDiffer>
    <experiments>3</experiments>
</comment>
<comment type="interaction">
    <interactant intactId="EBI-749295">
        <id>O75716</id>
    </interactant>
    <interactant intactId="EBI-12811889">
        <id>Q9Y6H3</id>
        <label>ATP23</label>
    </interactant>
    <organismsDiffer>false</organismsDiffer>
    <experiments>3</experiments>
</comment>
<comment type="interaction">
    <interactant intactId="EBI-749295">
        <id>O75716</id>
    </interactant>
    <interactant intactId="EBI-17508719">
        <id>Q7RTU4</id>
        <label>BHLHA9</label>
    </interactant>
    <organismsDiffer>false</organismsDiffer>
    <experiments>3</experiments>
</comment>
<comment type="interaction">
    <interactant intactId="EBI-749295">
        <id>O75716</id>
    </interactant>
    <interactant intactId="EBI-739580">
        <id>Q13137</id>
        <label>CALCOCO2</label>
    </interactant>
    <organismsDiffer>false</organismsDiffer>
    <experiments>3</experiments>
</comment>
<comment type="interaction">
    <interactant intactId="EBI-749295">
        <id>O75716</id>
    </interactant>
    <interactant intactId="EBI-78176">
        <id>Q13185</id>
        <label>CBX3</label>
    </interactant>
    <organismsDiffer>false</organismsDiffer>
    <experiments>3</experiments>
</comment>
<comment type="interaction">
    <interactant intactId="EBI-749295">
        <id>O75716</id>
    </interactant>
    <interactant intactId="EBI-9038570">
        <id>P27918</id>
        <label>CFP</label>
    </interactant>
    <organismsDiffer>false</organismsDiffer>
    <experiments>3</experiments>
</comment>
<comment type="interaction">
    <interactant intactId="EBI-749295">
        <id>O75716</id>
    </interactant>
    <interactant intactId="EBI-748171">
        <id>O43186</id>
        <label>CRX</label>
    </interactant>
    <organismsDiffer>false</organismsDiffer>
    <experiments>3</experiments>
</comment>
<comment type="interaction">
    <interactant intactId="EBI-749295">
        <id>O75716</id>
    </interactant>
    <interactant intactId="EBI-12842046">
        <id>A8MUP2</id>
        <label>CSKMT</label>
    </interactant>
    <organismsDiffer>false</organismsDiffer>
    <experiments>3</experiments>
</comment>
<comment type="interaction">
    <interactant intactId="EBI-749295">
        <id>O75716</id>
    </interactant>
    <interactant intactId="EBI-3867333">
        <id>A8MQ03</id>
        <label>CYSRT1</label>
    </interactant>
    <organismsDiffer>false</organismsDiffer>
    <experiments>3</experiments>
</comment>
<comment type="interaction">
    <interactant intactId="EBI-749295">
        <id>O75716</id>
    </interactant>
    <interactant intactId="EBI-742054">
        <id>Q96D03</id>
        <label>DDIT4L</label>
    </interactant>
    <organismsDiffer>false</organismsDiffer>
    <experiments>3</experiments>
</comment>
<comment type="interaction">
    <interactant intactId="EBI-749295">
        <id>O75716</id>
    </interactant>
    <interactant intactId="EBI-3952284">
        <id>Q96EY1-2</id>
        <label>DNAJA3</label>
    </interactant>
    <organismsDiffer>false</organismsDiffer>
    <experiments>3</experiments>
</comment>
<comment type="interaction">
    <interactant intactId="EBI-749295">
        <id>O75716</id>
    </interactant>
    <interactant intactId="EBI-719554">
        <id>Q9Y295</id>
        <label>DRG1</label>
    </interactant>
    <organismsDiffer>false</organismsDiffer>
    <experiments>3</experiments>
</comment>
<comment type="interaction">
    <interactant intactId="EBI-749295">
        <id>O75716</id>
    </interactant>
    <interactant intactId="EBI-743414">
        <id>O95967</id>
        <label>EFEMP2</label>
    </interactant>
    <organismsDiffer>false</organismsDiffer>
    <experiments>6</experiments>
</comment>
<comment type="interaction">
    <interactant intactId="EBI-749295">
        <id>O75716</id>
    </interactant>
    <interactant intactId="EBI-2349927">
        <id>Q5JST6</id>
        <label>EFHC2</label>
    </interactant>
    <organismsDiffer>false</organismsDiffer>
    <experiments>3</experiments>
</comment>
<comment type="interaction">
    <interactant intactId="EBI-749295">
        <id>O75716</id>
    </interactant>
    <interactant intactId="EBI-750451">
        <id>Q96Q35</id>
        <label>FLACC1</label>
    </interactant>
    <organismsDiffer>false</organismsDiffer>
    <experiments>3</experiments>
</comment>
<comment type="interaction">
    <interactant intactId="EBI-749295">
        <id>O75716</id>
    </interactant>
    <interactant intactId="EBI-725515">
        <id>O43559</id>
        <label>FRS3</label>
    </interactant>
    <organismsDiffer>false</organismsDiffer>
    <experiments>3</experiments>
</comment>
<comment type="interaction">
    <interactant intactId="EBI-749295">
        <id>O75716</id>
    </interactant>
    <interactant intactId="EBI-11022345">
        <id>P51114-2</id>
        <label>FXR1</label>
    </interactant>
    <organismsDiffer>false</organismsDiffer>
    <experiments>3</experiments>
</comment>
<comment type="interaction">
    <interactant intactId="EBI-749295">
        <id>O75716</id>
    </interactant>
    <interactant intactId="EBI-638925">
        <id>Q06546</id>
        <label>GABPA</label>
    </interactant>
    <organismsDiffer>false</organismsDiffer>
    <experiments>3</experiments>
</comment>
<comment type="interaction">
    <interactant intactId="EBI-749295">
        <id>O75716</id>
    </interactant>
    <interactant intactId="EBI-747204">
        <id>Q9UKT9</id>
        <label>IKZF3</label>
    </interactant>
    <organismsDiffer>false</organismsDiffer>
    <experiments>3</experiments>
</comment>
<comment type="interaction">
    <interactant intactId="EBI-749295">
        <id>O75716</id>
    </interactant>
    <interactant intactId="EBI-6509505">
        <id>Q0VD86</id>
        <label>INCA1</label>
    </interactant>
    <organismsDiffer>false</organismsDiffer>
    <experiments>6</experiments>
</comment>
<comment type="interaction">
    <interactant intactId="EBI-749295">
        <id>O75716</id>
    </interactant>
    <interactant intactId="EBI-10189448">
        <id>Q9BQ13</id>
        <label>KCTD14</label>
    </interactant>
    <organismsDiffer>false</organismsDiffer>
    <experiments>4</experiments>
</comment>
<comment type="interaction">
    <interactant intactId="EBI-749295">
        <id>O75716</id>
    </interactant>
    <interactant intactId="EBI-12278688">
        <id>Q9BQ13-2</id>
        <label>KCTD14</label>
    </interactant>
    <organismsDiffer>false</organismsDiffer>
    <experiments>3</experiments>
</comment>
<comment type="interaction">
    <interactant intactId="EBI-749295">
        <id>O75716</id>
    </interactant>
    <interactant intactId="EBI-743960">
        <id>Q8N5Z5</id>
        <label>KCTD17</label>
    </interactant>
    <organismsDiffer>false</organismsDiffer>
    <experiments>9</experiments>
</comment>
<comment type="interaction">
    <interactant intactId="EBI-749295">
        <id>O75716</id>
    </interactant>
    <interactant intactId="EBI-10189368">
        <id>Q8N5Z5-2</id>
        <label>KCTD17</label>
    </interactant>
    <organismsDiffer>false</organismsDiffer>
    <experiments>3</experiments>
</comment>
<comment type="interaction">
    <interactant intactId="EBI-749295">
        <id>O75716</id>
    </interactant>
    <interactant intactId="EBI-10693436">
        <id>Q9BS75</id>
        <label>KLHL20</label>
    </interactant>
    <organismsDiffer>false</organismsDiffer>
    <experiments>3</experiments>
</comment>
<comment type="interaction">
    <interactant intactId="EBI-749295">
        <id>O75716</id>
    </interactant>
    <interactant intactId="EBI-10981970">
        <id>Q5T749</id>
        <label>KPRP</label>
    </interactant>
    <organismsDiffer>false</organismsDiffer>
    <experiments>3</experiments>
</comment>
<comment type="interaction">
    <interactant intactId="EBI-749295">
        <id>O75716</id>
    </interactant>
    <interactant intactId="EBI-948001">
        <id>Q15323</id>
        <label>KRT31</label>
    </interactant>
    <organismsDiffer>false</organismsDiffer>
    <experiments>3</experiments>
</comment>
<comment type="interaction">
    <interactant intactId="EBI-749295">
        <id>O75716</id>
    </interactant>
    <interactant intactId="EBI-11959885">
        <id>Q07627</id>
        <label>KRTAP1-1</label>
    </interactant>
    <organismsDiffer>false</organismsDiffer>
    <experiments>3</experiments>
</comment>
<comment type="interaction">
    <interactant intactId="EBI-749295">
        <id>O75716</id>
    </interactant>
    <interactant intactId="EBI-11749135">
        <id>Q8IUG1</id>
        <label>KRTAP1-3</label>
    </interactant>
    <organismsDiffer>false</organismsDiffer>
    <experiments>3</experiments>
</comment>
<comment type="interaction">
    <interactant intactId="EBI-749295">
        <id>O75716</id>
    </interactant>
    <interactant intactId="EBI-10172150">
        <id>P60370</id>
        <label>KRTAP10-5</label>
    </interactant>
    <organismsDiffer>false</organismsDiffer>
    <experiments>3</experiments>
</comment>
<comment type="interaction">
    <interactant intactId="EBI-749295">
        <id>O75716</id>
    </interactant>
    <interactant intactId="EBI-10172290">
        <id>P60409</id>
        <label>KRTAP10-7</label>
    </interactant>
    <organismsDiffer>false</organismsDiffer>
    <experiments>3</experiments>
</comment>
<comment type="interaction">
    <interactant intactId="EBI-749295">
        <id>O75716</id>
    </interactant>
    <interactant intactId="EBI-10171774">
        <id>P60410</id>
        <label>KRTAP10-8</label>
    </interactant>
    <organismsDiffer>false</organismsDiffer>
    <experiments>6</experiments>
</comment>
<comment type="interaction">
    <interactant intactId="EBI-749295">
        <id>O75716</id>
    </interactant>
    <interactant intactId="EBI-10172052">
        <id>P60411</id>
        <label>KRTAP10-9</label>
    </interactant>
    <organismsDiffer>false</organismsDiffer>
    <experiments>3</experiments>
</comment>
<comment type="interaction">
    <interactant intactId="EBI-749295">
        <id>O75716</id>
    </interactant>
    <interactant intactId="EBI-1052037">
        <id>Q8IUC1</id>
        <label>KRTAP11-1</label>
    </interactant>
    <organismsDiffer>false</organismsDiffer>
    <experiments>3</experiments>
</comment>
<comment type="interaction">
    <interactant intactId="EBI-749295">
        <id>O75716</id>
    </interactant>
    <interactant intactId="EBI-11953846">
        <id>Q52LG2</id>
        <label>KRTAP13-2</label>
    </interactant>
    <organismsDiffer>false</organismsDiffer>
    <experiments>3</experiments>
</comment>
<comment type="interaction">
    <interactant intactId="EBI-749295">
        <id>O75716</id>
    </interactant>
    <interactant intactId="EBI-3957672">
        <id>Q6PEX3</id>
        <label>KRTAP26-1</label>
    </interactant>
    <organismsDiffer>false</organismsDiffer>
    <experiments>3</experiments>
</comment>
<comment type="interaction">
    <interactant intactId="EBI-749295">
        <id>O75716</id>
    </interactant>
    <interactant intactId="EBI-22311199">
        <id>Q3LI67</id>
        <label>KRTAP6-3</label>
    </interactant>
    <organismsDiffer>false</organismsDiffer>
    <experiments>3</experiments>
</comment>
<comment type="interaction">
    <interactant intactId="EBI-749295">
        <id>O75716</id>
    </interactant>
    <interactant intactId="EBI-748397">
        <id>P50222</id>
        <label>MEOX2</label>
    </interactant>
    <organismsDiffer>false</organismsDiffer>
    <experiments>3</experiments>
</comment>
<comment type="interaction">
    <interactant intactId="EBI-749295">
        <id>O75716</id>
    </interactant>
    <interactant intactId="EBI-12224671">
        <id>Q7Z3K6-2</id>
        <label>MIER3</label>
    </interactant>
    <organismsDiffer>false</organismsDiffer>
    <experiments>3</experiments>
</comment>
<comment type="interaction">
    <interactant intactId="EBI-749295">
        <id>O75716</id>
    </interactant>
    <interactant intactId="EBI-2801965">
        <id>Q5JXC2</id>
        <label>MIIP</label>
    </interactant>
    <organismsDiffer>false</organismsDiffer>
    <experiments>4</experiments>
</comment>
<comment type="interaction">
    <interactant intactId="EBI-749295">
        <id>O75716</id>
    </interactant>
    <interactant intactId="EBI-742948">
        <id>Q5JR59</id>
        <label>MTUS2</label>
    </interactant>
    <organismsDiffer>false</organismsDiffer>
    <experiments>3</experiments>
</comment>
<comment type="interaction">
    <interactant intactId="EBI-749295">
        <id>O75716</id>
    </interactant>
    <interactant intactId="EBI-12126220">
        <id>Q93015-2</id>
        <label>NAA80</label>
    </interactant>
    <organismsDiffer>false</organismsDiffer>
    <experiments>5</experiments>
</comment>
<comment type="interaction">
    <interactant intactId="EBI-749295">
        <id>O75716</id>
    </interactant>
    <interactant intactId="EBI-740897">
        <id>Q9GZT8</id>
        <label>NIF3L1</label>
    </interactant>
    <organismsDiffer>false</organismsDiffer>
    <experiments>3</experiments>
</comment>
<comment type="interaction">
    <interactant intactId="EBI-749295">
        <id>O75716</id>
    </interactant>
    <interactant intactId="EBI-945833">
        <id>Q7Z3S9</id>
        <label>NOTCH2NLA</label>
    </interactant>
    <organismsDiffer>false</organismsDiffer>
    <experiments>3</experiments>
</comment>
<comment type="interaction">
    <interactant intactId="EBI-749295">
        <id>O75716</id>
    </interactant>
    <interactant intactId="EBI-22310682">
        <id>P0DPK4</id>
        <label>NOTCH2NLC</label>
    </interactant>
    <organismsDiffer>false</organismsDiffer>
    <experiments>3</experiments>
</comment>
<comment type="interaction">
    <interactant intactId="EBI-749295">
        <id>O75716</id>
    </interactant>
    <interactant intactId="EBI-751290">
        <id>Q92824</id>
        <label>PCSK5</label>
    </interactant>
    <organismsDiffer>false</organismsDiffer>
    <experiments>3</experiments>
</comment>
<comment type="interaction">
    <interactant intactId="EBI-749295">
        <id>O75716</id>
    </interactant>
    <interactant intactId="EBI-2692890">
        <id>Q96KN3</id>
        <label>PKNOX2</label>
    </interactant>
    <organismsDiffer>false</organismsDiffer>
    <experiments>3</experiments>
</comment>
<comment type="interaction">
    <interactant intactId="EBI-749295">
        <id>O75716</id>
    </interactant>
    <interactant intactId="EBI-726466">
        <id>O15496</id>
        <label>PLA2G10</label>
    </interactant>
    <organismsDiffer>false</organismsDiffer>
    <experiments>3</experiments>
</comment>
<comment type="interaction">
    <interactant intactId="EBI-749295">
        <id>O75716</id>
    </interactant>
    <interactant intactId="EBI-740019">
        <id>O15162</id>
        <label>PLSCR1</label>
    </interactant>
    <organismsDiffer>false</organismsDiffer>
    <experiments>3</experiments>
</comment>
<comment type="interaction">
    <interactant intactId="EBI-749295">
        <id>O75716</id>
    </interactant>
    <interactant intactId="EBI-750734">
        <id>Q9NRY6</id>
        <label>PLSCR3</label>
    </interactant>
    <organismsDiffer>false</organismsDiffer>
    <experiments>6</experiments>
</comment>
<comment type="interaction">
    <interactant intactId="EBI-749295">
        <id>O75716</id>
    </interactant>
    <interactant intactId="EBI-11320284">
        <id>Q9NQX0</id>
        <label>PRDM6</label>
    </interactant>
    <organismsDiffer>false</organismsDiffer>
    <experiments>3</experiments>
</comment>
<comment type="interaction">
    <interactant intactId="EBI-749295">
        <id>O75716</id>
    </interactant>
    <interactant intactId="EBI-2805516">
        <id>P31321</id>
        <label>PRKAR1B</label>
    </interactant>
    <organismsDiffer>false</organismsDiffer>
    <experiments>3</experiments>
</comment>
<comment type="interaction">
    <interactant intactId="EBI-749295">
        <id>O75716</id>
    </interactant>
    <interactant intactId="EBI-2860297">
        <id>Q03431</id>
        <label>PTH1R</label>
    </interactant>
    <organismsDiffer>false</organismsDiffer>
    <experiments>3</experiments>
</comment>
<comment type="interaction">
    <interactant intactId="EBI-749295">
        <id>O75716</id>
    </interactant>
    <interactant intactId="EBI-307352">
        <id>Q04864</id>
        <label>REL</label>
    </interactant>
    <organismsDiffer>false</organismsDiffer>
    <experiments>3</experiments>
</comment>
<comment type="interaction">
    <interactant intactId="EBI-749295">
        <id>O75716</id>
    </interactant>
    <interactant intactId="EBI-10829018">
        <id>Q04864-2</id>
        <label>REL</label>
    </interactant>
    <organismsDiffer>false</organismsDiffer>
    <experiments>3</experiments>
</comment>
<comment type="interaction">
    <interactant intactId="EBI-749295">
        <id>O75716</id>
    </interactant>
    <interactant intactId="EBI-746118">
        <id>Q8HWS3</id>
        <label>RFX6</label>
    </interactant>
    <organismsDiffer>false</organismsDiffer>
    <experiments>3</experiments>
</comment>
<comment type="interaction">
    <interactant intactId="EBI-749295">
        <id>O75716</id>
    </interactant>
    <interactant intactId="EBI-744831">
        <id>P49247</id>
        <label>RPIA</label>
    </interactant>
    <organismsDiffer>false</organismsDiffer>
    <experiments>4</experiments>
</comment>
<comment type="interaction">
    <interactant intactId="EBI-749295">
        <id>O75716</id>
    </interactant>
    <interactant intactId="EBI-12821217">
        <id>Q2I0M5</id>
        <label>RSPO4</label>
    </interactant>
    <organismsDiffer>false</organismsDiffer>
    <experiments>3</experiments>
</comment>
<comment type="interaction">
    <interactant intactId="EBI-749295">
        <id>O75716</id>
    </interactant>
    <interactant intactId="EBI-3957636">
        <id>Q8IYX7</id>
        <label>SAXO1</label>
    </interactant>
    <organismsDiffer>false</organismsDiffer>
    <experiments>6</experiments>
</comment>
<comment type="interaction">
    <interactant intactId="EBI-749295">
        <id>O75716</id>
    </interactant>
    <interactant intactId="EBI-2902468">
        <id>P12757</id>
        <label>SKIL</label>
    </interactant>
    <organismsDiffer>false</organismsDiffer>
    <experiments>3</experiments>
</comment>
<comment type="interaction">
    <interactant intactId="EBI-749295">
        <id>O75716</id>
    </interactant>
    <interactant intactId="EBI-617737">
        <id>O14508</id>
        <label>SOCS2</label>
    </interactant>
    <organismsDiffer>false</organismsDiffer>
    <experiments>3</experiments>
</comment>
<comment type="interaction">
    <interactant intactId="EBI-749295">
        <id>O75716</id>
    </interactant>
    <interactant intactId="EBI-742487">
        <id>O43597</id>
        <label>SPRY2</label>
    </interactant>
    <organismsDiffer>false</organismsDiffer>
    <experiments>3</experiments>
</comment>
<comment type="interaction">
    <interactant intactId="EBI-749295">
        <id>O75716</id>
    </interactant>
    <interactant intactId="EBI-722877">
        <id>Q99081</id>
        <label>TCF12</label>
    </interactant>
    <organismsDiffer>false</organismsDiffer>
    <experiments>3</experiments>
</comment>
<comment type="interaction">
    <interactant intactId="EBI-749295">
        <id>O75716</id>
    </interactant>
    <interactant intactId="EBI-533224">
        <id>P15884</id>
        <label>TCF4</label>
    </interactant>
    <organismsDiffer>false</organismsDiffer>
    <experiments>3</experiments>
</comment>
<comment type="interaction">
    <interactant intactId="EBI-749295">
        <id>O75716</id>
    </interactant>
    <interactant intactId="EBI-717810">
        <id>Q08117</id>
        <label>TLE5</label>
    </interactant>
    <organismsDiffer>false</organismsDiffer>
    <experiments>3</experiments>
</comment>
<comment type="interaction">
    <interactant intactId="EBI-749295">
        <id>O75716</id>
    </interactant>
    <interactant intactId="EBI-2505861">
        <id>Q13829</id>
        <label>TNFAIP1</label>
    </interactant>
    <organismsDiffer>false</organismsDiffer>
    <experiments>3</experiments>
</comment>
<comment type="interaction">
    <interactant intactId="EBI-749295">
        <id>O75716</id>
    </interactant>
    <interactant intactId="EBI-744798">
        <id>O43734</id>
        <label>TRAF3IP2</label>
    </interactant>
    <organismsDiffer>false</organismsDiffer>
    <experiments>3</experiments>
</comment>
<comment type="interaction">
    <interactant intactId="EBI-749295">
        <id>O75716</id>
    </interactant>
    <interactant intactId="EBI-719493">
        <id>P14373</id>
        <label>TRIM27</label>
    </interactant>
    <organismsDiffer>false</organismsDiffer>
    <experiments>3</experiments>
</comment>
<comment type="interaction">
    <interactant intactId="EBI-749295">
        <id>O75716</id>
    </interactant>
    <interactant intactId="EBI-5235829">
        <id>Q8IWZ5</id>
        <label>TRIM42</label>
    </interactant>
    <organismsDiffer>false</organismsDiffer>
    <experiments>6</experiments>
</comment>
<comment type="interaction">
    <interactant intactId="EBI-749295">
        <id>O75716</id>
    </interactant>
    <interactant intactId="EBI-742327">
        <id>Q15654</id>
        <label>TRIP6</label>
    </interactant>
    <organismsDiffer>false</organismsDiffer>
    <experiments>3</experiments>
</comment>
<comment type="interaction">
    <interactant intactId="EBI-749295">
        <id>O75716</id>
    </interactant>
    <interactant intactId="EBI-11975223">
        <id>Q70EL1-9</id>
        <label>USP54</label>
    </interactant>
    <organismsDiffer>false</organismsDiffer>
    <experiments>3</experiments>
</comment>
<comment type="interaction">
    <interactant intactId="EBI-749295">
        <id>O75716</id>
    </interactant>
    <interactant intactId="EBI-373456">
        <id>Q9Y3S2</id>
        <label>ZNF330</label>
    </interactant>
    <organismsDiffer>false</organismsDiffer>
    <experiments>6</experiments>
</comment>
<comment type="interaction">
    <interactant intactId="EBI-749295">
        <id>O75716</id>
    </interactant>
    <interactant intactId="EBI-10252492">
        <id>Q6P1L6</id>
        <label>ZNF343</label>
    </interactant>
    <organismsDiffer>false</organismsDiffer>
    <experiments>3</experiments>
</comment>
<comment type="interaction">
    <interactant intactId="EBI-749295">
        <id>O75716</id>
    </interactant>
    <interactant intactId="EBI-10251462">
        <id>Q6NX45</id>
        <label>ZNF774</label>
    </interactant>
    <organismsDiffer>false</organismsDiffer>
    <experiments>3</experiments>
</comment>
<comment type="interaction">
    <interactant intactId="EBI-749295">
        <id>O75716</id>
    </interactant>
    <interactant intactId="EBI-8429215">
        <id>P32233</id>
        <label>Drg1</label>
    </interactant>
    <organismsDiffer>true</organismsDiffer>
    <experiments>4</experiments>
</comment>
<comment type="interaction">
    <interactant intactId="EBI-749295">
        <id>O75716</id>
    </interactant>
    <interactant intactId="EBI-6480811">
        <id>Q7DB77</id>
        <label>tir</label>
    </interactant>
    <organismsDiffer>true</organismsDiffer>
    <experiments>3</experiments>
</comment>
<comment type="subcellular location">
    <subcellularLocation>
        <location>Cytoplasm</location>
        <location>Perinuclear region</location>
    </subcellularLocation>
    <subcellularLocation>
        <location evidence="1">Membrane</location>
        <topology evidence="1">Lipid-anchor</topology>
    </subcellularLocation>
    <text evidence="1">Associates with Golgi and Golgi-derived vesicles.</text>
</comment>
<comment type="tissue specificity">
    <text evidence="4">Ubiquitously expressed at very low levels.</text>
</comment>
<comment type="PTM">
    <text evidence="7">Mainly autophosphorylated on serine/threonine residues. Also autophosphorylated on Tyr-198.</text>
</comment>
<comment type="PTM">
    <text evidence="4">It is uncertain whether palmitoylation is on Cys-6 and/or Cys-8.</text>
</comment>
<comment type="similarity">
    <text evidence="2">Belongs to the protein kinase superfamily. Ser/Thr protein kinase family.</text>
</comment>
<comment type="sequence caution" evidence="9">
    <conflict type="frameshift">
        <sequence resource="EMBL-CDS" id="AAV38392"/>
    </conflict>
</comment>
<comment type="sequence caution" evidence="9">
    <conflict type="frameshift">
        <sequence resource="EMBL-CDS" id="CAA06700"/>
    </conflict>
</comment>
<protein>
    <recommendedName>
        <fullName>Serine/threonine-protein kinase 16</fullName>
        <ecNumber>2.7.11.1</ecNumber>
    </recommendedName>
    <alternativeName>
        <fullName>Myristoylated and palmitoylated serine/threonine-protein kinase</fullName>
        <shortName>MPSK</shortName>
    </alternativeName>
    <alternativeName>
        <fullName>Protein kinase PKL12</fullName>
    </alternativeName>
    <alternativeName>
        <fullName>TGF-beta-stimulated factor 1</fullName>
        <shortName>TSF-1</shortName>
    </alternativeName>
    <alternativeName>
        <fullName>Tyrosine-protein kinase STK16</fullName>
        <ecNumber>2.7.10.2</ecNumber>
    </alternativeName>
    <alternativeName>
        <fullName>hPSK</fullName>
    </alternativeName>
</protein>
<proteinExistence type="evidence at protein level"/>
<evidence type="ECO:0000250" key="1"/>
<evidence type="ECO:0000255" key="2">
    <source>
        <dbReference type="PROSITE-ProRule" id="PRU00159"/>
    </source>
</evidence>
<evidence type="ECO:0000255" key="3">
    <source>
        <dbReference type="PROSITE-ProRule" id="PRU10027"/>
    </source>
</evidence>
<evidence type="ECO:0000269" key="4">
    <source>
    </source>
</evidence>
<evidence type="ECO:0000269" key="5">
    <source>
    </source>
</evidence>
<evidence type="ECO:0000269" key="6">
    <source>
    </source>
</evidence>
<evidence type="ECO:0000269" key="7">
    <source>
    </source>
</evidence>
<evidence type="ECO:0000269" key="8">
    <source ref="8"/>
</evidence>
<evidence type="ECO:0000305" key="9"/>
<evidence type="ECO:0000305" key="10">
    <source>
    </source>
</evidence>
<evidence type="ECO:0007829" key="11">
    <source>
        <dbReference type="PDB" id="2BUJ"/>
    </source>
</evidence>
<dbReference type="EC" id="2.7.11.1"/>
<dbReference type="EC" id="2.7.10.2"/>
<dbReference type="EMBL" id="AJ005791">
    <property type="protein sequence ID" value="CAA06700.1"/>
    <property type="status" value="ALT_FRAME"/>
    <property type="molecule type" value="mRNA"/>
</dbReference>
<dbReference type="EMBL" id="AF060798">
    <property type="protein sequence ID" value="AAC28337.1"/>
    <property type="molecule type" value="mRNA"/>
</dbReference>
<dbReference type="EMBL" id="AB020739">
    <property type="protein sequence ID" value="BAB16311.1"/>
    <property type="molecule type" value="mRNA"/>
</dbReference>
<dbReference type="EMBL" id="AJ010872">
    <property type="protein sequence ID" value="CAA09387.1"/>
    <property type="molecule type" value="mRNA"/>
</dbReference>
<dbReference type="EMBL" id="AF203910">
    <property type="protein sequence ID" value="AAG23728.1"/>
    <property type="molecule type" value="mRNA"/>
</dbReference>
<dbReference type="EMBL" id="BT019585">
    <property type="protein sequence ID" value="AAV38392.1"/>
    <property type="status" value="ALT_FRAME"/>
    <property type="molecule type" value="mRNA"/>
</dbReference>
<dbReference type="EMBL" id="AK292694">
    <property type="protein sequence ID" value="BAF85383.1"/>
    <property type="molecule type" value="mRNA"/>
</dbReference>
<dbReference type="EMBL" id="CR407675">
    <property type="protein sequence ID" value="CAG28603.1"/>
    <property type="molecule type" value="mRNA"/>
</dbReference>
<dbReference type="EMBL" id="BC002618">
    <property type="protein sequence ID" value="AAH02618.1"/>
    <property type="molecule type" value="mRNA"/>
</dbReference>
<dbReference type="EMBL" id="BC053998">
    <property type="protein sequence ID" value="AAH53998.1"/>
    <property type="molecule type" value="mRNA"/>
</dbReference>
<dbReference type="CCDS" id="CCDS42822.1"/>
<dbReference type="RefSeq" id="NP_001008910.1">
    <property type="nucleotide sequence ID" value="NM_001008910.4"/>
</dbReference>
<dbReference type="RefSeq" id="NP_001317142.1">
    <property type="nucleotide sequence ID" value="NM_001330213.2"/>
</dbReference>
<dbReference type="PDB" id="2BUJ">
    <property type="method" value="X-ray"/>
    <property type="resolution" value="2.60 A"/>
    <property type="chains" value="A/B=13-305"/>
</dbReference>
<dbReference type="PDBsum" id="2BUJ"/>
<dbReference type="SMR" id="O75716"/>
<dbReference type="BioGRID" id="114144">
    <property type="interactions" value="171"/>
</dbReference>
<dbReference type="DIP" id="DIP-29598N"/>
<dbReference type="FunCoup" id="O75716">
    <property type="interactions" value="3550"/>
</dbReference>
<dbReference type="IntAct" id="O75716">
    <property type="interactions" value="136"/>
</dbReference>
<dbReference type="MINT" id="O75716"/>
<dbReference type="STRING" id="9606.ENSP00000379964"/>
<dbReference type="BindingDB" id="O75716"/>
<dbReference type="ChEMBL" id="CHEMBL3938"/>
<dbReference type="DrugBank" id="DB12010">
    <property type="generic name" value="Fostamatinib"/>
</dbReference>
<dbReference type="DrugCentral" id="O75716"/>
<dbReference type="GuidetoPHARMACOLOGY" id="2213"/>
<dbReference type="GlyGen" id="O75716">
    <property type="glycosylation" value="1 site, 1 O-linked glycan (1 site)"/>
</dbReference>
<dbReference type="iPTMnet" id="O75716"/>
<dbReference type="PhosphoSitePlus" id="O75716"/>
<dbReference type="SwissPalm" id="O75716"/>
<dbReference type="BioMuta" id="STK16"/>
<dbReference type="jPOST" id="O75716"/>
<dbReference type="MassIVE" id="O75716"/>
<dbReference type="PaxDb" id="9606-ENSP00000386928"/>
<dbReference type="PeptideAtlas" id="O75716"/>
<dbReference type="ProteomicsDB" id="50174"/>
<dbReference type="Pumba" id="O75716"/>
<dbReference type="Antibodypedia" id="34316">
    <property type="antibodies" value="279 antibodies from 26 providers"/>
</dbReference>
<dbReference type="DNASU" id="8576"/>
<dbReference type="Ensembl" id="ENST00000396738.7">
    <property type="protein sequence ID" value="ENSP00000379964.2"/>
    <property type="gene ID" value="ENSG00000115661.14"/>
</dbReference>
<dbReference type="Ensembl" id="ENST00000409638.7">
    <property type="protein sequence ID" value="ENSP00000386928.3"/>
    <property type="gene ID" value="ENSG00000115661.14"/>
</dbReference>
<dbReference type="GeneID" id="8576"/>
<dbReference type="KEGG" id="hsa:8576"/>
<dbReference type="MANE-Select" id="ENST00000396738.7">
    <property type="protein sequence ID" value="ENSP00000379964.2"/>
    <property type="RefSeq nucleotide sequence ID" value="NM_001330213.2"/>
    <property type="RefSeq protein sequence ID" value="NP_001317142.1"/>
</dbReference>
<dbReference type="UCSC" id="uc002vko.3">
    <property type="organism name" value="human"/>
</dbReference>
<dbReference type="AGR" id="HGNC:11394"/>
<dbReference type="CTD" id="8576"/>
<dbReference type="DisGeNET" id="8576"/>
<dbReference type="GeneCards" id="STK16"/>
<dbReference type="HGNC" id="HGNC:11394">
    <property type="gene designation" value="STK16"/>
</dbReference>
<dbReference type="HPA" id="ENSG00000115661">
    <property type="expression patterns" value="Low tissue specificity"/>
</dbReference>
<dbReference type="MalaCards" id="STK16"/>
<dbReference type="MIM" id="604719">
    <property type="type" value="gene"/>
</dbReference>
<dbReference type="neXtProt" id="NX_O75716"/>
<dbReference type="OpenTargets" id="ENSG00000115661"/>
<dbReference type="PharmGKB" id="PA36202"/>
<dbReference type="VEuPathDB" id="HostDB:ENSG00000115661"/>
<dbReference type="eggNOG" id="KOG2345">
    <property type="taxonomic scope" value="Eukaryota"/>
</dbReference>
<dbReference type="GeneTree" id="ENSGT00550000075037"/>
<dbReference type="InParanoid" id="O75716"/>
<dbReference type="OMA" id="AMHQYKV"/>
<dbReference type="OrthoDB" id="248923at2759"/>
<dbReference type="PAN-GO" id="O75716">
    <property type="GO annotations" value="3 GO annotations based on evolutionary models"/>
</dbReference>
<dbReference type="PhylomeDB" id="O75716"/>
<dbReference type="TreeFam" id="TF350433"/>
<dbReference type="BRENDA" id="2.7.11.1">
    <property type="organism ID" value="2681"/>
</dbReference>
<dbReference type="PathwayCommons" id="O75716"/>
<dbReference type="SignaLink" id="O75716"/>
<dbReference type="SIGNOR" id="O75716"/>
<dbReference type="BioGRID-ORCS" id="8576">
    <property type="hits" value="13 hits in 1190 CRISPR screens"/>
</dbReference>
<dbReference type="ChiTaRS" id="STK16">
    <property type="organism name" value="human"/>
</dbReference>
<dbReference type="EvolutionaryTrace" id="O75716"/>
<dbReference type="GeneWiki" id="STK16"/>
<dbReference type="GenomeRNAi" id="8576"/>
<dbReference type="Pharos" id="O75716">
    <property type="development level" value="Tchem"/>
</dbReference>
<dbReference type="PRO" id="PR:O75716"/>
<dbReference type="Proteomes" id="UP000005640">
    <property type="component" value="Chromosome 2"/>
</dbReference>
<dbReference type="RNAct" id="O75716">
    <property type="molecule type" value="protein"/>
</dbReference>
<dbReference type="Bgee" id="ENSG00000115661">
    <property type="expression patterns" value="Expressed in mucosa of transverse colon and 117 other cell types or tissues"/>
</dbReference>
<dbReference type="ExpressionAtlas" id="O75716">
    <property type="expression patterns" value="baseline and differential"/>
</dbReference>
<dbReference type="GO" id="GO:0005737">
    <property type="term" value="C:cytoplasm"/>
    <property type="evidence" value="ECO:0000318"/>
    <property type="project" value="GO_Central"/>
</dbReference>
<dbReference type="GO" id="GO:0005829">
    <property type="term" value="C:cytosol"/>
    <property type="evidence" value="ECO:0000314"/>
    <property type="project" value="HPA"/>
</dbReference>
<dbReference type="GO" id="GO:0005794">
    <property type="term" value="C:Golgi apparatus"/>
    <property type="evidence" value="ECO:0000318"/>
    <property type="project" value="GO_Central"/>
</dbReference>
<dbReference type="GO" id="GO:0005798">
    <property type="term" value="C:Golgi-associated vesicle"/>
    <property type="evidence" value="ECO:0007669"/>
    <property type="project" value="Ensembl"/>
</dbReference>
<dbReference type="GO" id="GO:0016604">
    <property type="term" value="C:nuclear body"/>
    <property type="evidence" value="ECO:0000314"/>
    <property type="project" value="HPA"/>
</dbReference>
<dbReference type="GO" id="GO:0005654">
    <property type="term" value="C:nucleoplasm"/>
    <property type="evidence" value="ECO:0000314"/>
    <property type="project" value="HPA"/>
</dbReference>
<dbReference type="GO" id="GO:0048471">
    <property type="term" value="C:perinuclear region of cytoplasm"/>
    <property type="evidence" value="ECO:0007669"/>
    <property type="project" value="UniProtKB-SubCell"/>
</dbReference>
<dbReference type="GO" id="GO:0005886">
    <property type="term" value="C:plasma membrane"/>
    <property type="evidence" value="ECO:0000314"/>
    <property type="project" value="HPA"/>
</dbReference>
<dbReference type="GO" id="GO:0005524">
    <property type="term" value="F:ATP binding"/>
    <property type="evidence" value="ECO:0007669"/>
    <property type="project" value="UniProtKB-KW"/>
</dbReference>
<dbReference type="GO" id="GO:0004715">
    <property type="term" value="F:non-membrane spanning protein tyrosine kinase activity"/>
    <property type="evidence" value="ECO:0007669"/>
    <property type="project" value="UniProtKB-EC"/>
</dbReference>
<dbReference type="GO" id="GO:0106310">
    <property type="term" value="F:protein serine kinase activity"/>
    <property type="evidence" value="ECO:0007669"/>
    <property type="project" value="RHEA"/>
</dbReference>
<dbReference type="GO" id="GO:0004674">
    <property type="term" value="F:protein serine/threonine kinase activity"/>
    <property type="evidence" value="ECO:0000318"/>
    <property type="project" value="GO_Central"/>
</dbReference>
<dbReference type="GO" id="GO:0000978">
    <property type="term" value="F:RNA polymerase II cis-regulatory region sequence-specific DNA binding"/>
    <property type="evidence" value="ECO:0007669"/>
    <property type="project" value="Ensembl"/>
</dbReference>
<dbReference type="GO" id="GO:0071560">
    <property type="term" value="P:cellular response to transforming growth factor beta stimulus"/>
    <property type="evidence" value="ECO:0007669"/>
    <property type="project" value="Ensembl"/>
</dbReference>
<dbReference type="GO" id="GO:0045944">
    <property type="term" value="P:positive regulation of transcription by RNA polymerase II"/>
    <property type="evidence" value="ECO:0007669"/>
    <property type="project" value="Ensembl"/>
</dbReference>
<dbReference type="GO" id="GO:0046777">
    <property type="term" value="P:protein autophosphorylation"/>
    <property type="evidence" value="ECO:0000314"/>
    <property type="project" value="UniProtKB"/>
</dbReference>
<dbReference type="CDD" id="cd13986">
    <property type="entry name" value="STKc_16"/>
    <property type="match status" value="1"/>
</dbReference>
<dbReference type="FunFam" id="1.10.510.10:FF:000396">
    <property type="entry name" value="Serine/threonine-protein kinase 16"/>
    <property type="match status" value="1"/>
</dbReference>
<dbReference type="FunFam" id="3.30.200.20:FF:000297">
    <property type="entry name" value="serine/threonine-protein kinase 16"/>
    <property type="match status" value="1"/>
</dbReference>
<dbReference type="Gene3D" id="3.30.200.20">
    <property type="entry name" value="Phosphorylase Kinase, domain 1"/>
    <property type="match status" value="1"/>
</dbReference>
<dbReference type="Gene3D" id="1.10.510.10">
    <property type="entry name" value="Transferase(Phosphotransferase) domain 1"/>
    <property type="match status" value="1"/>
</dbReference>
<dbReference type="InterPro" id="IPR011009">
    <property type="entry name" value="Kinase-like_dom_sf"/>
</dbReference>
<dbReference type="InterPro" id="IPR000719">
    <property type="entry name" value="Prot_kinase_dom"/>
</dbReference>
<dbReference type="InterPro" id="IPR052239">
    <property type="entry name" value="Ser/Thr-specific_kinases"/>
</dbReference>
<dbReference type="InterPro" id="IPR008271">
    <property type="entry name" value="Ser/Thr_kinase_AS"/>
</dbReference>
<dbReference type="PANTHER" id="PTHR45998">
    <property type="entry name" value="SERINE/THREONINE-PROTEIN KINASE 16"/>
    <property type="match status" value="1"/>
</dbReference>
<dbReference type="PANTHER" id="PTHR45998:SF2">
    <property type="entry name" value="SERINE_THREONINE-PROTEIN KINASE 16"/>
    <property type="match status" value="1"/>
</dbReference>
<dbReference type="Pfam" id="PF00069">
    <property type="entry name" value="Pkinase"/>
    <property type="match status" value="1"/>
</dbReference>
<dbReference type="PIRSF" id="PIRSF000654">
    <property type="entry name" value="Integrin-linked_kinase"/>
    <property type="match status" value="1"/>
</dbReference>
<dbReference type="SMART" id="SM00220">
    <property type="entry name" value="S_TKc"/>
    <property type="match status" value="1"/>
</dbReference>
<dbReference type="SUPFAM" id="SSF56112">
    <property type="entry name" value="Protein kinase-like (PK-like)"/>
    <property type="match status" value="1"/>
</dbReference>
<dbReference type="PROSITE" id="PS50011">
    <property type="entry name" value="PROTEIN_KINASE_DOM"/>
    <property type="match status" value="1"/>
</dbReference>
<dbReference type="PROSITE" id="PS00108">
    <property type="entry name" value="PROTEIN_KINASE_ST"/>
    <property type="match status" value="1"/>
</dbReference>
<organism>
    <name type="scientific">Homo sapiens</name>
    <name type="common">Human</name>
    <dbReference type="NCBI Taxonomy" id="9606"/>
    <lineage>
        <taxon>Eukaryota</taxon>
        <taxon>Metazoa</taxon>
        <taxon>Chordata</taxon>
        <taxon>Craniata</taxon>
        <taxon>Vertebrata</taxon>
        <taxon>Euteleostomi</taxon>
        <taxon>Mammalia</taxon>
        <taxon>Eutheria</taxon>
        <taxon>Euarchontoglires</taxon>
        <taxon>Primates</taxon>
        <taxon>Haplorrhini</taxon>
        <taxon>Catarrhini</taxon>
        <taxon>Hominidae</taxon>
        <taxon>Homo</taxon>
    </lineage>
</organism>
<feature type="initiator methionine" description="Removed">
    <location>
        <position position="1"/>
    </location>
</feature>
<feature type="chain" id="PRO_0000086701" description="Serine/threonine-protein kinase 16">
    <location>
        <begin position="2"/>
        <end position="305"/>
    </location>
</feature>
<feature type="domain" description="Protein kinase" evidence="2">
    <location>
        <begin position="20"/>
        <end position="293"/>
    </location>
</feature>
<feature type="region of interest" description="Activation loop">
    <location>
        <begin position="166"/>
        <end position="202"/>
    </location>
</feature>
<feature type="active site" description="Proton acceptor" evidence="2 3">
    <location>
        <position position="148"/>
    </location>
</feature>
<feature type="binding site" evidence="2">
    <location>
        <begin position="26"/>
        <end position="34"/>
    </location>
    <ligand>
        <name>ATP</name>
        <dbReference type="ChEBI" id="CHEBI:30616"/>
    </ligand>
</feature>
<feature type="binding site" evidence="2">
    <location>
        <position position="49"/>
    </location>
    <ligand>
        <name>ATP</name>
        <dbReference type="ChEBI" id="CHEBI:30616"/>
    </ligand>
</feature>
<feature type="modified residue" description="Phosphothreonine; by autocatalysis" evidence="7">
    <location>
        <position position="185"/>
    </location>
</feature>
<feature type="modified residue" description="Phosphoserine; by autocatalysis" evidence="7">
    <location>
        <position position="197"/>
    </location>
</feature>
<feature type="modified residue" description="Phosphotyrosine; by autocatalysis" evidence="7">
    <location>
        <position position="198"/>
    </location>
</feature>
<feature type="lipid moiety-binding region" description="N-myristoyl glycine" evidence="4">
    <location>
        <position position="2"/>
    </location>
</feature>
<feature type="lipid moiety-binding region" description="S-palmitoyl cysteine" evidence="10">
    <location>
        <position position="6"/>
    </location>
</feature>
<feature type="lipid moiety-binding region" description="S-palmitoyl cysteine" evidence="10">
    <location>
        <position position="8"/>
    </location>
</feature>
<feature type="sequence variant" id="VAR_041140" description="In dbSNP:rs34799131." evidence="6">
    <original>H</original>
    <variation>R</variation>
    <location>
        <position position="41"/>
    </location>
</feature>
<feature type="sequence variant" id="VAR_041141" description="In dbSNP:rs35947471." evidence="6">
    <original>E</original>
    <variation>K</variation>
    <location>
        <position position="55"/>
    </location>
</feature>
<feature type="sequence variant" id="VAR_041142" description="In dbSNP:rs34282267." evidence="6">
    <original>I</original>
    <variation>V</variation>
    <location>
        <position position="77"/>
    </location>
</feature>
<feature type="sequence variant" id="VAR_041143" description="In dbSNP:rs17849638." evidence="5 6 8">
    <original>R</original>
    <variation>W</variation>
    <location>
        <position position="266"/>
    </location>
</feature>
<feature type="sequence variant" id="VAR_041144" description="In dbSNP:rs35454203." evidence="6">
    <original>P</original>
    <variation>L</variation>
    <location>
        <position position="277"/>
    </location>
</feature>
<feature type="mutagenesis site" description="Loss of myristoylation." evidence="4">
    <original>G</original>
    <variation>A</variation>
    <location>
        <position position="2"/>
    </location>
</feature>
<feature type="mutagenesis site" description="Loss of palmitoylation." evidence="4">
    <original>C</original>
    <variation>S</variation>
    <location>
        <position position="6"/>
    </location>
</feature>
<feature type="mutagenesis site" description="Loss of palmitoylation." evidence="4">
    <original>C</original>
    <variation>S</variation>
    <location>
        <position position="8"/>
    </location>
</feature>
<feature type="sequence conflict" description="In Ref. 6; AAV38392." evidence="9" ref="6">
    <original>R</original>
    <variation>L</variation>
    <location>
        <position position="59"/>
    </location>
</feature>
<feature type="sequence conflict" description="In Ref. 7; BAF85383." evidence="9" ref="7">
    <original>S</original>
    <variation>P</variation>
    <location>
        <position position="180"/>
    </location>
</feature>
<feature type="sequence conflict" description="In Ref. 1; CAA06700 and 4; CAA09387." evidence="9" ref="1 4">
    <original>D</original>
    <variation>G</variation>
    <location>
        <position position="213"/>
    </location>
</feature>
<feature type="sequence conflict" description="In Ref. 2; AAC28337." evidence="9" ref="2">
    <original>L</original>
    <variation>F</variation>
    <location>
        <position position="221"/>
    </location>
</feature>
<feature type="sequence conflict" description="In Ref. 4; CAA09387." evidence="9" ref="4">
    <original>G</original>
    <variation>S</variation>
    <location>
        <position position="222"/>
    </location>
</feature>
<feature type="strand" evidence="11">
    <location>
        <begin position="13"/>
        <end position="15"/>
    </location>
</feature>
<feature type="strand" evidence="11">
    <location>
        <begin position="18"/>
        <end position="27"/>
    </location>
</feature>
<feature type="strand" evidence="11">
    <location>
        <begin position="32"/>
        <end position="39"/>
    </location>
</feature>
<feature type="turn" evidence="11">
    <location>
        <begin position="40"/>
        <end position="42"/>
    </location>
</feature>
<feature type="strand" evidence="11">
    <location>
        <begin position="45"/>
        <end position="55"/>
    </location>
</feature>
<feature type="helix" evidence="11">
    <location>
        <begin position="56"/>
        <end position="70"/>
    </location>
</feature>
<feature type="strand" evidence="11">
    <location>
        <begin position="82"/>
        <end position="88"/>
    </location>
</feature>
<feature type="strand" evidence="11">
    <location>
        <begin position="91"/>
        <end position="99"/>
    </location>
</feature>
<feature type="helix" evidence="11">
    <location>
        <begin position="106"/>
        <end position="114"/>
    </location>
</feature>
<feature type="turn" evidence="11">
    <location>
        <begin position="115"/>
        <end position="117"/>
    </location>
</feature>
<feature type="helix" evidence="11">
    <location>
        <begin position="122"/>
        <end position="141"/>
    </location>
</feature>
<feature type="helix" evidence="11">
    <location>
        <begin position="151"/>
        <end position="153"/>
    </location>
</feature>
<feature type="strand" evidence="11">
    <location>
        <begin position="154"/>
        <end position="156"/>
    </location>
</feature>
<feature type="strand" evidence="11">
    <location>
        <begin position="162"/>
        <end position="164"/>
    </location>
</feature>
<feature type="strand" evidence="11">
    <location>
        <begin position="171"/>
        <end position="173"/>
    </location>
</feature>
<feature type="strand" evidence="11">
    <location>
        <begin position="175"/>
        <end position="179"/>
    </location>
</feature>
<feature type="helix" evidence="11">
    <location>
        <begin position="180"/>
        <end position="193"/>
    </location>
</feature>
<feature type="helix" evidence="11">
    <location>
        <begin position="196"/>
        <end position="198"/>
    </location>
</feature>
<feature type="helix" evidence="11">
    <location>
        <begin position="201"/>
        <end position="203"/>
    </location>
</feature>
<feature type="strand" evidence="11">
    <location>
        <begin position="208"/>
        <end position="212"/>
    </location>
</feature>
<feature type="helix" evidence="11">
    <location>
        <begin position="215"/>
        <end position="230"/>
    </location>
</feature>
<feature type="helix" evidence="11">
    <location>
        <begin position="236"/>
        <end position="240"/>
    </location>
</feature>
<feature type="helix" evidence="11">
    <location>
        <begin position="245"/>
        <end position="250"/>
    </location>
</feature>
<feature type="helix" evidence="11">
    <location>
        <begin position="263"/>
        <end position="272"/>
    </location>
</feature>
<feature type="helix" evidence="11">
    <location>
        <begin position="277"/>
        <end position="279"/>
    </location>
</feature>
<feature type="helix" evidence="11">
    <location>
        <begin position="283"/>
        <end position="292"/>
    </location>
</feature>
<gene>
    <name type="primary">STK16</name>
    <name type="synonym">MPSK1</name>
    <name type="synonym">PKL12</name>
    <name type="synonym">TSF1</name>
</gene>
<sequence>MGHALCVCSRGTVIIDNKRYLFIQKLGEGGFSYVDLVEGLHDGHFYALKRILCHEQQDREEAQREADMHRLFNHPNILRLVAYCLRERGAKHEAWLLLPFFKRGTLWNEIERLKDKGNFLTEDQILWLLLGICRGLEAIHAKGYAHRDLKPTNILLGDEGQPVLMDLGSMNQACIHVEGSRQALTLQDWAAQRCTISYRAPELFSVQSHCVIDERTDVWSLGCVLYAMMFGEGPYDMVFQKGDSVALAVQNQLSIPQSPRHSSALRQLLNSMMTVDPHQRPHIPLLLSQLEALQPPAPGQHTTQI</sequence>
<accession>O75716</accession>
<accession>A8K9H9</accession>
<accession>Q5U0F8</accession>
<accession>Q96KI2</accession>
<accession>Q9BUH4</accession>
<accession>Q9UEN3</accession>
<accession>Q9UP78</accession>
<reference key="1">
    <citation type="journal article" date="1998" name="Biochem. Biophys. Res. Commun.">
        <title>Cloning, expression analysis, and functional characterization of PKL12, a member of a new subfamily of ser/thr kinases.</title>
        <authorList>
            <person name="Ligos J.M."/>
            <person name="Gerwin N."/>
            <person name="Fernandez P."/>
            <person name="Gutierrez-Ramos J.-C."/>
            <person name="Bernad A."/>
        </authorList>
    </citation>
    <scope>NUCLEOTIDE SEQUENCE [MRNA]</scope>
</reference>
<reference key="2">
    <citation type="journal article" date="1999" name="Biochem. Biophys. Res. Commun.">
        <title>Identification and characterization of a myristylated and palmitylated serine/threonine protein kinase.</title>
        <authorList>
            <person name="Berson A.E."/>
            <person name="Young C."/>
            <person name="Morrison S.L."/>
            <person name="Fujii G.H."/>
            <person name="Sheung J."/>
            <person name="Wu B."/>
            <person name="Bolen J.B."/>
            <person name="Burkhardt A.L."/>
        </authorList>
    </citation>
    <scope>NUCLEOTIDE SEQUENCE [MRNA]</scope>
    <scope>TISSUE SPECIFICITY</scope>
    <scope>FUNCTION</scope>
    <scope>AUTOPHOSPHORYLATION</scope>
    <scope>MYRISTOYLATION AT GLY-2</scope>
    <scope>PALMITOYLATION AT CYS-6 AND CYS-8</scope>
    <scope>MUTAGENESIS OF GLY-2; CYS-6 AND CYS-8</scope>
    <source>
        <tissue>Dendritic cell</tissue>
    </source>
</reference>
<reference key="3">
    <citation type="journal article" date="2000" name="Biochem. J.">
        <title>A novel transcriptional factor with Ser/Thr kinase activity involved in the transforming growth factor (TGF)-beta signalling pathway.</title>
        <authorList>
            <person name="Ohta S."/>
            <person name="Takeuchi M."/>
            <person name="Deguchi M."/>
            <person name="Tsuji T."/>
            <person name="Gahara Y."/>
            <person name="Nagata K."/>
        </authorList>
    </citation>
    <scope>NUCLEOTIDE SEQUENCE [MRNA]</scope>
</reference>
<reference key="4">
    <citation type="submission" date="1998-11" db="EMBL/GenBank/DDBJ databases">
        <title>Characterization of a ubiquitous expressed human serine/threonine kinase.</title>
        <authorList>
            <person name="Wabakken T.K."/>
            <person name="Aasheim H.-C."/>
        </authorList>
    </citation>
    <scope>NUCLEOTIDE SEQUENCE [MRNA]</scope>
    <source>
        <tissue>Blood</tissue>
    </source>
</reference>
<reference key="5">
    <citation type="submission" date="1999-11" db="EMBL/GenBank/DDBJ databases">
        <authorList>
            <person name="Stairs D.B."/>
            <person name="Ha S.I."/>
            <person name="Chodosh L.A."/>
        </authorList>
    </citation>
    <scope>NUCLEOTIDE SEQUENCE [MRNA]</scope>
    <source>
        <tissue>Brain</tissue>
    </source>
</reference>
<reference key="6">
    <citation type="submission" date="2004-10" db="EMBL/GenBank/DDBJ databases">
        <title>Cloning of human full-length CDSs in BD Creator(TM) system donor vector.</title>
        <authorList>
            <person name="Kalnine N."/>
            <person name="Chen X."/>
            <person name="Rolfs A."/>
            <person name="Halleck A."/>
            <person name="Hines L."/>
            <person name="Eisenstein S."/>
            <person name="Koundinya M."/>
            <person name="Raphael J."/>
            <person name="Moreira D."/>
            <person name="Kelley T."/>
            <person name="LaBaer J."/>
            <person name="Lin Y."/>
            <person name="Phelan M."/>
            <person name="Farmer A."/>
        </authorList>
    </citation>
    <scope>NUCLEOTIDE SEQUENCE [LARGE SCALE MRNA]</scope>
</reference>
<reference key="7">
    <citation type="journal article" date="2004" name="Nat. Genet.">
        <title>Complete sequencing and characterization of 21,243 full-length human cDNAs.</title>
        <authorList>
            <person name="Ota T."/>
            <person name="Suzuki Y."/>
            <person name="Nishikawa T."/>
            <person name="Otsuki T."/>
            <person name="Sugiyama T."/>
            <person name="Irie R."/>
            <person name="Wakamatsu A."/>
            <person name="Hayashi K."/>
            <person name="Sato H."/>
            <person name="Nagai K."/>
            <person name="Kimura K."/>
            <person name="Makita H."/>
            <person name="Sekine M."/>
            <person name="Obayashi M."/>
            <person name="Nishi T."/>
            <person name="Shibahara T."/>
            <person name="Tanaka T."/>
            <person name="Ishii S."/>
            <person name="Yamamoto J."/>
            <person name="Saito K."/>
            <person name="Kawai Y."/>
            <person name="Isono Y."/>
            <person name="Nakamura Y."/>
            <person name="Nagahari K."/>
            <person name="Murakami K."/>
            <person name="Yasuda T."/>
            <person name="Iwayanagi T."/>
            <person name="Wagatsuma M."/>
            <person name="Shiratori A."/>
            <person name="Sudo H."/>
            <person name="Hosoiri T."/>
            <person name="Kaku Y."/>
            <person name="Kodaira H."/>
            <person name="Kondo H."/>
            <person name="Sugawara M."/>
            <person name="Takahashi M."/>
            <person name="Kanda K."/>
            <person name="Yokoi T."/>
            <person name="Furuya T."/>
            <person name="Kikkawa E."/>
            <person name="Omura Y."/>
            <person name="Abe K."/>
            <person name="Kamihara K."/>
            <person name="Katsuta N."/>
            <person name="Sato K."/>
            <person name="Tanikawa M."/>
            <person name="Yamazaki M."/>
            <person name="Ninomiya K."/>
            <person name="Ishibashi T."/>
            <person name="Yamashita H."/>
            <person name="Murakawa K."/>
            <person name="Fujimori K."/>
            <person name="Tanai H."/>
            <person name="Kimata M."/>
            <person name="Watanabe M."/>
            <person name="Hiraoka S."/>
            <person name="Chiba Y."/>
            <person name="Ishida S."/>
            <person name="Ono Y."/>
            <person name="Takiguchi S."/>
            <person name="Watanabe S."/>
            <person name="Yosida M."/>
            <person name="Hotuta T."/>
            <person name="Kusano J."/>
            <person name="Kanehori K."/>
            <person name="Takahashi-Fujii A."/>
            <person name="Hara H."/>
            <person name="Tanase T.-O."/>
            <person name="Nomura Y."/>
            <person name="Togiya S."/>
            <person name="Komai F."/>
            <person name="Hara R."/>
            <person name="Takeuchi K."/>
            <person name="Arita M."/>
            <person name="Imose N."/>
            <person name="Musashino K."/>
            <person name="Yuuki H."/>
            <person name="Oshima A."/>
            <person name="Sasaki N."/>
            <person name="Aotsuka S."/>
            <person name="Yoshikawa Y."/>
            <person name="Matsunawa H."/>
            <person name="Ichihara T."/>
            <person name="Shiohata N."/>
            <person name="Sano S."/>
            <person name="Moriya S."/>
            <person name="Momiyama H."/>
            <person name="Satoh N."/>
            <person name="Takami S."/>
            <person name="Terashima Y."/>
            <person name="Suzuki O."/>
            <person name="Nakagawa S."/>
            <person name="Senoh A."/>
            <person name="Mizoguchi H."/>
            <person name="Goto Y."/>
            <person name="Shimizu F."/>
            <person name="Wakebe H."/>
            <person name="Hishigaki H."/>
            <person name="Watanabe T."/>
            <person name="Sugiyama A."/>
            <person name="Takemoto M."/>
            <person name="Kawakami B."/>
            <person name="Yamazaki M."/>
            <person name="Watanabe K."/>
            <person name="Kumagai A."/>
            <person name="Itakura S."/>
            <person name="Fukuzumi Y."/>
            <person name="Fujimori Y."/>
            <person name="Komiyama M."/>
            <person name="Tashiro H."/>
            <person name="Tanigami A."/>
            <person name="Fujiwara T."/>
            <person name="Ono T."/>
            <person name="Yamada K."/>
            <person name="Fujii Y."/>
            <person name="Ozaki K."/>
            <person name="Hirao M."/>
            <person name="Ohmori Y."/>
            <person name="Kawabata A."/>
            <person name="Hikiji T."/>
            <person name="Kobatake N."/>
            <person name="Inagaki H."/>
            <person name="Ikema Y."/>
            <person name="Okamoto S."/>
            <person name="Okitani R."/>
            <person name="Kawakami T."/>
            <person name="Noguchi S."/>
            <person name="Itoh T."/>
            <person name="Shigeta K."/>
            <person name="Senba T."/>
            <person name="Matsumura K."/>
            <person name="Nakajima Y."/>
            <person name="Mizuno T."/>
            <person name="Morinaga M."/>
            <person name="Sasaki M."/>
            <person name="Togashi T."/>
            <person name="Oyama M."/>
            <person name="Hata H."/>
            <person name="Watanabe M."/>
            <person name="Komatsu T."/>
            <person name="Mizushima-Sugano J."/>
            <person name="Satoh T."/>
            <person name="Shirai Y."/>
            <person name="Takahashi Y."/>
            <person name="Nakagawa K."/>
            <person name="Okumura K."/>
            <person name="Nagase T."/>
            <person name="Nomura N."/>
            <person name="Kikuchi H."/>
            <person name="Masuho Y."/>
            <person name="Yamashita R."/>
            <person name="Nakai K."/>
            <person name="Yada T."/>
            <person name="Nakamura Y."/>
            <person name="Ohara O."/>
            <person name="Isogai T."/>
            <person name="Sugano S."/>
        </authorList>
    </citation>
    <scope>NUCLEOTIDE SEQUENCE [LARGE SCALE MRNA]</scope>
    <source>
        <tissue>Thymus</tissue>
    </source>
</reference>
<reference key="8">
    <citation type="submission" date="2004-05" db="EMBL/GenBank/DDBJ databases">
        <title>Cloning of human full open reading frames in Gateway(TM) system entry vector (pDONR201).</title>
        <authorList>
            <person name="Ebert L."/>
            <person name="Schick M."/>
            <person name="Neubert P."/>
            <person name="Schatten R."/>
            <person name="Henze S."/>
            <person name="Korn B."/>
        </authorList>
    </citation>
    <scope>NUCLEOTIDE SEQUENCE [LARGE SCALE MRNA]</scope>
    <scope>VARIANT TRP-266</scope>
</reference>
<reference key="9">
    <citation type="journal article" date="2004" name="Genome Res.">
        <title>The status, quality, and expansion of the NIH full-length cDNA project: the Mammalian Gene Collection (MGC).</title>
        <authorList>
            <consortium name="The MGC Project Team"/>
        </authorList>
    </citation>
    <scope>NUCLEOTIDE SEQUENCE [LARGE SCALE MRNA]</scope>
    <scope>VARIANT TRP-266</scope>
    <source>
        <tissue>Colon</tissue>
        <tissue>Lymph</tissue>
    </source>
</reference>
<reference key="10">
    <citation type="journal article" date="2008" name="Structure">
        <title>Structure of the human protein kinase MPSK1 reveals an atypical activation loop architecture.</title>
        <authorList>
            <person name="Eswaran J."/>
            <person name="Bernad A."/>
            <person name="Ligos J.M."/>
            <person name="Guinea B."/>
            <person name="Debreczeni J.E."/>
            <person name="Sobott F."/>
            <person name="Parker S.A."/>
            <person name="Najmanovich R."/>
            <person name="Turk B.E."/>
            <person name="Knapp S."/>
        </authorList>
    </citation>
    <scope>X-RAY CRYSTALLOGRAPHY (2.6 ANGSTROMS) OF 13-304 OF WILD TYPE AND IN COMPLEX WITH STAUROSPORINE</scope>
    <scope>SUBUNIT</scope>
    <scope>INTERACTION WITH DRG1</scope>
    <scope>PHOSPHORYLATION AT THR-185; SER-197 AND TYR-198</scope>
    <scope>IDENTIFICATION BY MASS SPECTROMETRY</scope>
</reference>
<reference key="11">
    <citation type="journal article" date="2007" name="Nature">
        <title>Patterns of somatic mutation in human cancer genomes.</title>
        <authorList>
            <person name="Greenman C."/>
            <person name="Stephens P."/>
            <person name="Smith R."/>
            <person name="Dalgliesh G.L."/>
            <person name="Hunter C."/>
            <person name="Bignell G."/>
            <person name="Davies H."/>
            <person name="Teague J."/>
            <person name="Butler A."/>
            <person name="Stevens C."/>
            <person name="Edkins S."/>
            <person name="O'Meara S."/>
            <person name="Vastrik I."/>
            <person name="Schmidt E.E."/>
            <person name="Avis T."/>
            <person name="Barthorpe S."/>
            <person name="Bhamra G."/>
            <person name="Buck G."/>
            <person name="Choudhury B."/>
            <person name="Clements J."/>
            <person name="Cole J."/>
            <person name="Dicks E."/>
            <person name="Forbes S."/>
            <person name="Gray K."/>
            <person name="Halliday K."/>
            <person name="Harrison R."/>
            <person name="Hills K."/>
            <person name="Hinton J."/>
            <person name="Jenkinson A."/>
            <person name="Jones D."/>
            <person name="Menzies A."/>
            <person name="Mironenko T."/>
            <person name="Perry J."/>
            <person name="Raine K."/>
            <person name="Richardson D."/>
            <person name="Shepherd R."/>
            <person name="Small A."/>
            <person name="Tofts C."/>
            <person name="Varian J."/>
            <person name="Webb T."/>
            <person name="West S."/>
            <person name="Widaa S."/>
            <person name="Yates A."/>
            <person name="Cahill D.P."/>
            <person name="Louis D.N."/>
            <person name="Goldstraw P."/>
            <person name="Nicholson A.G."/>
            <person name="Brasseur F."/>
            <person name="Looijenga L."/>
            <person name="Weber B.L."/>
            <person name="Chiew Y.-E."/>
            <person name="DeFazio A."/>
            <person name="Greaves M.F."/>
            <person name="Green A.R."/>
            <person name="Campbell P."/>
            <person name="Birney E."/>
            <person name="Easton D.F."/>
            <person name="Chenevix-Trench G."/>
            <person name="Tan M.-H."/>
            <person name="Khoo S.K."/>
            <person name="Teh B.T."/>
            <person name="Yuen S.T."/>
            <person name="Leung S.Y."/>
            <person name="Wooster R."/>
            <person name="Futreal P.A."/>
            <person name="Stratton M.R."/>
        </authorList>
    </citation>
    <scope>VARIANTS [LARGE SCALE ANALYSIS] ARG-41; LYS-55; VAL-77; TRP-266 AND LEU-277</scope>
</reference>
<name>STK16_HUMAN</name>